<organism>
    <name type="scientific">Salmonella typhi</name>
    <dbReference type="NCBI Taxonomy" id="90370"/>
    <lineage>
        <taxon>Bacteria</taxon>
        <taxon>Pseudomonadati</taxon>
        <taxon>Pseudomonadota</taxon>
        <taxon>Gammaproteobacteria</taxon>
        <taxon>Enterobacterales</taxon>
        <taxon>Enterobacteriaceae</taxon>
        <taxon>Salmonella</taxon>
    </lineage>
</organism>
<gene>
    <name evidence="1" type="primary">cyaY</name>
    <name type="ordered locus">STY3616</name>
    <name type="ordered locus">t3354</name>
</gene>
<name>CYAY_SALTI</name>
<proteinExistence type="inferred from homology"/>
<evidence type="ECO:0000255" key="1">
    <source>
        <dbReference type="HAMAP-Rule" id="MF_00142"/>
    </source>
</evidence>
<dbReference type="EMBL" id="AL513382">
    <property type="protein sequence ID" value="CAD09377.1"/>
    <property type="molecule type" value="Genomic_DNA"/>
</dbReference>
<dbReference type="EMBL" id="AE014613">
    <property type="protein sequence ID" value="AAO70882.1"/>
    <property type="molecule type" value="Genomic_DNA"/>
</dbReference>
<dbReference type="RefSeq" id="NP_457808.1">
    <property type="nucleotide sequence ID" value="NC_003198.1"/>
</dbReference>
<dbReference type="RefSeq" id="WP_000999925.1">
    <property type="nucleotide sequence ID" value="NZ_WSUR01000033.1"/>
</dbReference>
<dbReference type="SMR" id="Q8Z3A4"/>
<dbReference type="STRING" id="220341.gene:17587468"/>
<dbReference type="KEGG" id="stt:t3354"/>
<dbReference type="KEGG" id="sty:STY3616"/>
<dbReference type="PATRIC" id="fig|220341.7.peg.3685"/>
<dbReference type="eggNOG" id="COG1965">
    <property type="taxonomic scope" value="Bacteria"/>
</dbReference>
<dbReference type="HOGENOM" id="CLU_080880_3_0_6"/>
<dbReference type="OMA" id="EPMHEIW"/>
<dbReference type="OrthoDB" id="285675at2"/>
<dbReference type="Proteomes" id="UP000000541">
    <property type="component" value="Chromosome"/>
</dbReference>
<dbReference type="Proteomes" id="UP000002670">
    <property type="component" value="Chromosome"/>
</dbReference>
<dbReference type="GO" id="GO:0005829">
    <property type="term" value="C:cytosol"/>
    <property type="evidence" value="ECO:0007669"/>
    <property type="project" value="TreeGrafter"/>
</dbReference>
<dbReference type="GO" id="GO:0008199">
    <property type="term" value="F:ferric iron binding"/>
    <property type="evidence" value="ECO:0007669"/>
    <property type="project" value="InterPro"/>
</dbReference>
<dbReference type="GO" id="GO:0008198">
    <property type="term" value="F:ferrous iron binding"/>
    <property type="evidence" value="ECO:0007669"/>
    <property type="project" value="TreeGrafter"/>
</dbReference>
<dbReference type="GO" id="GO:0016226">
    <property type="term" value="P:iron-sulfur cluster assembly"/>
    <property type="evidence" value="ECO:0007669"/>
    <property type="project" value="UniProtKB-UniRule"/>
</dbReference>
<dbReference type="CDD" id="cd00503">
    <property type="entry name" value="Frataxin"/>
    <property type="match status" value="1"/>
</dbReference>
<dbReference type="FunFam" id="3.30.920.10:FF:000001">
    <property type="entry name" value="Iron-sulfur cluster assembly protein CyaY"/>
    <property type="match status" value="1"/>
</dbReference>
<dbReference type="Gene3D" id="3.30.920.10">
    <property type="entry name" value="Frataxin/CyaY"/>
    <property type="match status" value="1"/>
</dbReference>
<dbReference type="HAMAP" id="MF_00142">
    <property type="entry name" value="CyaY"/>
    <property type="match status" value="1"/>
</dbReference>
<dbReference type="InterPro" id="IPR047584">
    <property type="entry name" value="CyaY"/>
</dbReference>
<dbReference type="InterPro" id="IPR002908">
    <property type="entry name" value="Frataxin/CyaY"/>
</dbReference>
<dbReference type="InterPro" id="IPR036524">
    <property type="entry name" value="Frataxin/CyaY_sf"/>
</dbReference>
<dbReference type="InterPro" id="IPR020895">
    <property type="entry name" value="Frataxin_CS"/>
</dbReference>
<dbReference type="NCBIfam" id="TIGR03421">
    <property type="entry name" value="FeS_CyaY"/>
    <property type="match status" value="1"/>
</dbReference>
<dbReference type="PANTHER" id="PTHR16821">
    <property type="entry name" value="FRATAXIN"/>
    <property type="match status" value="1"/>
</dbReference>
<dbReference type="PANTHER" id="PTHR16821:SF2">
    <property type="entry name" value="FRATAXIN, MITOCHONDRIAL"/>
    <property type="match status" value="1"/>
</dbReference>
<dbReference type="Pfam" id="PF01491">
    <property type="entry name" value="Frataxin_Cyay"/>
    <property type="match status" value="1"/>
</dbReference>
<dbReference type="SMART" id="SM01219">
    <property type="entry name" value="Frataxin_Cyay"/>
    <property type="match status" value="1"/>
</dbReference>
<dbReference type="SUPFAM" id="SSF55387">
    <property type="entry name" value="Frataxin/Nqo15-like"/>
    <property type="match status" value="1"/>
</dbReference>
<dbReference type="PROSITE" id="PS01344">
    <property type="entry name" value="FRATAXIN_1"/>
    <property type="match status" value="1"/>
</dbReference>
<dbReference type="PROSITE" id="PS50810">
    <property type="entry name" value="FRATAXIN_2"/>
    <property type="match status" value="1"/>
</dbReference>
<feature type="chain" id="PRO_0000193960" description="Iron-sulfur cluster assembly protein CyaY">
    <location>
        <begin position="1"/>
        <end position="106"/>
    </location>
</feature>
<protein>
    <recommendedName>
        <fullName evidence="1">Iron-sulfur cluster assembly protein CyaY</fullName>
    </recommendedName>
</protein>
<keyword id="KW-0408">Iron</keyword>
<keyword id="KW-0479">Metal-binding</keyword>
<sequence length="106" mass="12172">MNDSEFHRLADALWLTIEERLDNWDGDSDIDCEINGGVLTLSFENGSKIIINRQEPLHQVWLATKQGGYHFDLKGDEWVCDRSGETFWDLLEQAATQQAGEKVSFR</sequence>
<accession>Q8Z3A4</accession>
<reference key="1">
    <citation type="journal article" date="2001" name="Nature">
        <title>Complete genome sequence of a multiple drug resistant Salmonella enterica serovar Typhi CT18.</title>
        <authorList>
            <person name="Parkhill J."/>
            <person name="Dougan G."/>
            <person name="James K.D."/>
            <person name="Thomson N.R."/>
            <person name="Pickard D."/>
            <person name="Wain J."/>
            <person name="Churcher C.M."/>
            <person name="Mungall K.L."/>
            <person name="Bentley S.D."/>
            <person name="Holden M.T.G."/>
            <person name="Sebaihia M."/>
            <person name="Baker S."/>
            <person name="Basham D."/>
            <person name="Brooks K."/>
            <person name="Chillingworth T."/>
            <person name="Connerton P."/>
            <person name="Cronin A."/>
            <person name="Davis P."/>
            <person name="Davies R.M."/>
            <person name="Dowd L."/>
            <person name="White N."/>
            <person name="Farrar J."/>
            <person name="Feltwell T."/>
            <person name="Hamlin N."/>
            <person name="Haque A."/>
            <person name="Hien T.T."/>
            <person name="Holroyd S."/>
            <person name="Jagels K."/>
            <person name="Krogh A."/>
            <person name="Larsen T.S."/>
            <person name="Leather S."/>
            <person name="Moule S."/>
            <person name="O'Gaora P."/>
            <person name="Parry C."/>
            <person name="Quail M.A."/>
            <person name="Rutherford K.M."/>
            <person name="Simmonds M."/>
            <person name="Skelton J."/>
            <person name="Stevens K."/>
            <person name="Whitehead S."/>
            <person name="Barrell B.G."/>
        </authorList>
    </citation>
    <scope>NUCLEOTIDE SEQUENCE [LARGE SCALE GENOMIC DNA]</scope>
    <source>
        <strain>CT18</strain>
    </source>
</reference>
<reference key="2">
    <citation type="journal article" date="2003" name="J. Bacteriol.">
        <title>Comparative genomics of Salmonella enterica serovar Typhi strains Ty2 and CT18.</title>
        <authorList>
            <person name="Deng W."/>
            <person name="Liou S.-R."/>
            <person name="Plunkett G. III"/>
            <person name="Mayhew G.F."/>
            <person name="Rose D.J."/>
            <person name="Burland V."/>
            <person name="Kodoyianni V."/>
            <person name="Schwartz D.C."/>
            <person name="Blattner F.R."/>
        </authorList>
    </citation>
    <scope>NUCLEOTIDE SEQUENCE [LARGE SCALE GENOMIC DNA]</scope>
    <source>
        <strain>ATCC 700931 / Ty2</strain>
    </source>
</reference>
<comment type="function">
    <text evidence="1">Involved in iron-sulfur (Fe-S) cluster assembly. May act as a regulator of Fe-S biogenesis.</text>
</comment>
<comment type="similarity">
    <text evidence="1">Belongs to the frataxin family.</text>
</comment>